<feature type="chain" id="PRO_0000137163" description="Nucleolar complex protein 14">
    <location>
        <begin position="1"/>
        <end position="810"/>
    </location>
</feature>
<feature type="region of interest" description="Disordered" evidence="1">
    <location>
        <begin position="1"/>
        <end position="44"/>
    </location>
</feature>
<feature type="region of interest" description="Disordered" evidence="1">
    <location>
        <begin position="63"/>
        <end position="95"/>
    </location>
</feature>
<feature type="region of interest" description="Disordered" evidence="1">
    <location>
        <begin position="134"/>
        <end position="155"/>
    </location>
</feature>
<feature type="region of interest" description="Disordered" evidence="1">
    <location>
        <begin position="276"/>
        <end position="308"/>
    </location>
</feature>
<feature type="region of interest" description="Disordered" evidence="1">
    <location>
        <begin position="338"/>
        <end position="358"/>
    </location>
</feature>
<feature type="region of interest" description="Disordered" evidence="1">
    <location>
        <begin position="788"/>
        <end position="810"/>
    </location>
</feature>
<feature type="compositionally biased region" description="Basic and acidic residues" evidence="1">
    <location>
        <begin position="35"/>
        <end position="44"/>
    </location>
</feature>
<feature type="compositionally biased region" description="Basic and acidic residues" evidence="1">
    <location>
        <begin position="68"/>
        <end position="77"/>
    </location>
</feature>
<feature type="compositionally biased region" description="Acidic residues" evidence="1">
    <location>
        <begin position="338"/>
        <end position="357"/>
    </location>
</feature>
<feature type="compositionally biased region" description="Basic and acidic residues" evidence="1">
    <location>
        <begin position="793"/>
        <end position="810"/>
    </location>
</feature>
<comment type="function">
    <text evidence="3 4">Involved in nucleolar processing of pre-18S ribosomal RNA. Has a role in the nuclear export of 40S pre-ribosomal subunit to the cytoplasm.</text>
</comment>
<comment type="subunit">
    <text evidence="2 3 4">Interacts with snoRNA U3. Interacts with EMG1, MPP10 and NOC4. Component of the ribosomal small subunit (SSU) processome composed of at least 40 protein subunits and snoRNA U3.</text>
</comment>
<comment type="interaction">
    <interactant intactId="EBI-35157">
        <id>Q99207</id>
    </interactant>
    <interactant intactId="EBI-11979">
        <id>Q06287</id>
        <label>EMG1</label>
    </interactant>
    <organismsDiffer>false</organismsDiffer>
    <experiments>8</experiments>
</comment>
<comment type="interaction">
    <interactant intactId="EBI-35157">
        <id>Q99207</id>
    </interactant>
    <interactant intactId="EBI-6482">
        <id>P38333</id>
        <label>ENP1</label>
    </interactant>
    <organismsDiffer>false</organismsDiffer>
    <experiments>11</experiments>
</comment>
<comment type="interaction">
    <interactant intactId="EBI-35157">
        <id>Q99207</id>
    </interactant>
    <interactant intactId="EBI-11168">
        <id>P47083</id>
        <label>MPP10</label>
    </interactant>
    <organismsDiffer>false</organismsDiffer>
    <experiments>7</experiments>
</comment>
<comment type="interaction">
    <interactant intactId="EBI-35157">
        <id>Q99207</id>
    </interactant>
    <interactant intactId="EBI-36459">
        <id>Q06512</id>
        <label>NOC4</label>
    </interactant>
    <organismsDiffer>false</organismsDiffer>
    <experiments>8</experiments>
</comment>
<comment type="interaction">
    <interactant intactId="EBI-35157">
        <id>Q99207</id>
    </interactant>
    <interactant intactId="EBI-36084">
        <id>Q12136</id>
        <label>SAS10</label>
    </interactant>
    <organismsDiffer>false</organismsDiffer>
    <experiments>4</experiments>
</comment>
<comment type="interaction">
    <interactant intactId="EBI-35157">
        <id>Q99207</id>
    </interactant>
    <interactant intactId="EBI-1878">
        <id>P53254</id>
        <label>UTP22</label>
    </interactant>
    <organismsDiffer>false</organismsDiffer>
    <experiments>8</experiments>
</comment>
<comment type="subcellular location">
    <subcellularLocation>
        <location evidence="3 4">Nucleus</location>
        <location evidence="3 4">Nucleolus</location>
    </subcellularLocation>
</comment>
<comment type="similarity">
    <text evidence="5">Belongs to the NOP14 family.</text>
</comment>
<keyword id="KW-0002">3D-structure</keyword>
<keyword id="KW-0539">Nucleus</keyword>
<keyword id="KW-1185">Reference proteome</keyword>
<keyword id="KW-0687">Ribonucleoprotein</keyword>
<keyword id="KW-0690">Ribosome biogenesis</keyword>
<keyword id="KW-0698">rRNA processing</keyword>
<dbReference type="EMBL" id="X97751">
    <property type="protein sequence ID" value="CAA66343.1"/>
    <property type="molecule type" value="Genomic_DNA"/>
</dbReference>
<dbReference type="EMBL" id="Z74196">
    <property type="protein sequence ID" value="CAA98722.1"/>
    <property type="molecule type" value="Genomic_DNA"/>
</dbReference>
<dbReference type="EMBL" id="BK006938">
    <property type="protein sequence ID" value="DAA11710.1"/>
    <property type="molecule type" value="Genomic_DNA"/>
</dbReference>
<dbReference type="PIR" id="S67696">
    <property type="entry name" value="S67696"/>
</dbReference>
<dbReference type="RefSeq" id="NP_010133.1">
    <property type="nucleotide sequence ID" value="NM_001180208.1"/>
</dbReference>
<dbReference type="PDB" id="5WLC">
    <property type="method" value="EM"/>
    <property type="resolution" value="3.80 A"/>
    <property type="chains" value="ST=1-810"/>
</dbReference>
<dbReference type="PDB" id="6KE6">
    <property type="method" value="EM"/>
    <property type="resolution" value="3.40 A"/>
    <property type="chains" value="RN=1-810"/>
</dbReference>
<dbReference type="PDB" id="6LQP">
    <property type="method" value="EM"/>
    <property type="resolution" value="3.20 A"/>
    <property type="chains" value="RN=1-810"/>
</dbReference>
<dbReference type="PDB" id="6LQQ">
    <property type="method" value="EM"/>
    <property type="resolution" value="4.10 A"/>
    <property type="chains" value="RN=1-810"/>
</dbReference>
<dbReference type="PDB" id="6LQR">
    <property type="method" value="EM"/>
    <property type="resolution" value="8.60 A"/>
    <property type="chains" value="RN=1-810"/>
</dbReference>
<dbReference type="PDB" id="6LQS">
    <property type="method" value="EM"/>
    <property type="resolution" value="3.80 A"/>
    <property type="chains" value="RN=1-810"/>
</dbReference>
<dbReference type="PDB" id="6LQT">
    <property type="method" value="EM"/>
    <property type="resolution" value="4.90 A"/>
    <property type="chains" value="RN=1-810"/>
</dbReference>
<dbReference type="PDB" id="6LQU">
    <property type="method" value="EM"/>
    <property type="resolution" value="3.70 A"/>
    <property type="chains" value="RN=1-810"/>
</dbReference>
<dbReference type="PDB" id="6LQV">
    <property type="method" value="EM"/>
    <property type="resolution" value="4.80 A"/>
    <property type="chains" value="RN=1-810"/>
</dbReference>
<dbReference type="PDB" id="6ZQA">
    <property type="method" value="EM"/>
    <property type="resolution" value="4.40 A"/>
    <property type="chains" value="UB=1-810"/>
</dbReference>
<dbReference type="PDB" id="6ZQB">
    <property type="method" value="EM"/>
    <property type="resolution" value="3.90 A"/>
    <property type="chains" value="UB=1-810"/>
</dbReference>
<dbReference type="PDB" id="6ZQC">
    <property type="method" value="EM"/>
    <property type="resolution" value="3.80 A"/>
    <property type="chains" value="UB=1-810"/>
</dbReference>
<dbReference type="PDB" id="6ZQD">
    <property type="method" value="EM"/>
    <property type="resolution" value="3.80 A"/>
    <property type="chains" value="UB=1-810"/>
</dbReference>
<dbReference type="PDB" id="6ZQE">
    <property type="method" value="EM"/>
    <property type="resolution" value="7.10 A"/>
    <property type="chains" value="UB=1-810"/>
</dbReference>
<dbReference type="PDB" id="6ZQF">
    <property type="method" value="EM"/>
    <property type="resolution" value="4.90 A"/>
    <property type="chains" value="UB=1-810"/>
</dbReference>
<dbReference type="PDB" id="6ZQG">
    <property type="method" value="EM"/>
    <property type="resolution" value="3.50 A"/>
    <property type="chains" value="UB=1-810"/>
</dbReference>
<dbReference type="PDB" id="7AJT">
    <property type="method" value="EM"/>
    <property type="resolution" value="4.60 A"/>
    <property type="chains" value="UB=1-810"/>
</dbReference>
<dbReference type="PDB" id="7AJU">
    <property type="method" value="EM"/>
    <property type="resolution" value="3.80 A"/>
    <property type="chains" value="UB=1-810"/>
</dbReference>
<dbReference type="PDB" id="7D4I">
    <property type="method" value="EM"/>
    <property type="resolution" value="4.00 A"/>
    <property type="chains" value="RN=1-810"/>
</dbReference>
<dbReference type="PDB" id="7D5S">
    <property type="method" value="EM"/>
    <property type="resolution" value="4.60 A"/>
    <property type="chains" value="RN=1-810"/>
</dbReference>
<dbReference type="PDB" id="7D5T">
    <property type="method" value="EM"/>
    <property type="resolution" value="6.00 A"/>
    <property type="chains" value="RN=1-810"/>
</dbReference>
<dbReference type="PDB" id="7D63">
    <property type="method" value="EM"/>
    <property type="resolution" value="12.30 A"/>
    <property type="chains" value="RN=1-810"/>
</dbReference>
<dbReference type="PDB" id="7SUK">
    <property type="method" value="EM"/>
    <property type="resolution" value="3.99 A"/>
    <property type="chains" value="ST=1-806"/>
</dbReference>
<dbReference type="PDBsum" id="5WLC"/>
<dbReference type="PDBsum" id="6KE6"/>
<dbReference type="PDBsum" id="6LQP"/>
<dbReference type="PDBsum" id="6LQQ"/>
<dbReference type="PDBsum" id="6LQR"/>
<dbReference type="PDBsum" id="6LQS"/>
<dbReference type="PDBsum" id="6LQT"/>
<dbReference type="PDBsum" id="6LQU"/>
<dbReference type="PDBsum" id="6LQV"/>
<dbReference type="PDBsum" id="6ZQA"/>
<dbReference type="PDBsum" id="6ZQB"/>
<dbReference type="PDBsum" id="6ZQC"/>
<dbReference type="PDBsum" id="6ZQD"/>
<dbReference type="PDBsum" id="6ZQE"/>
<dbReference type="PDBsum" id="6ZQF"/>
<dbReference type="PDBsum" id="6ZQG"/>
<dbReference type="PDBsum" id="7AJT"/>
<dbReference type="PDBsum" id="7AJU"/>
<dbReference type="PDBsum" id="7D4I"/>
<dbReference type="PDBsum" id="7D5S"/>
<dbReference type="PDBsum" id="7D5T"/>
<dbReference type="PDBsum" id="7D63"/>
<dbReference type="PDBsum" id="7SUK"/>
<dbReference type="EMDB" id="EMD-0949"/>
<dbReference type="EMDB" id="EMD-0950"/>
<dbReference type="EMDB" id="EMD-0951"/>
<dbReference type="EMDB" id="EMD-0952"/>
<dbReference type="EMDB" id="EMD-0953"/>
<dbReference type="EMDB" id="EMD-0954"/>
<dbReference type="EMDB" id="EMD-0955"/>
<dbReference type="EMDB" id="EMD-11357"/>
<dbReference type="EMDB" id="EMD-11358"/>
<dbReference type="EMDB" id="EMD-11359"/>
<dbReference type="EMDB" id="EMD-11360"/>
<dbReference type="EMDB" id="EMD-11361"/>
<dbReference type="EMDB" id="EMD-11362"/>
<dbReference type="EMDB" id="EMD-11363"/>
<dbReference type="EMDB" id="EMD-11807"/>
<dbReference type="EMDB" id="EMD-11808"/>
<dbReference type="EMDB" id="EMD-25441"/>
<dbReference type="EMDB" id="EMD-30574"/>
<dbReference type="EMDB" id="EMD-30584"/>
<dbReference type="EMDB" id="EMD-30585"/>
<dbReference type="EMDB" id="EMD-30588"/>
<dbReference type="EMDB" id="EMD-8859"/>
<dbReference type="EMDB" id="EMD-9964"/>
<dbReference type="SMR" id="Q99207"/>
<dbReference type="BioGRID" id="31913">
    <property type="interactions" value="376"/>
</dbReference>
<dbReference type="ComplexPortal" id="CPX-1735">
    <property type="entry name" value="NOP14-NOC4 complex"/>
</dbReference>
<dbReference type="DIP" id="DIP-4733N"/>
<dbReference type="FunCoup" id="Q99207">
    <property type="interactions" value="1352"/>
</dbReference>
<dbReference type="IntAct" id="Q99207">
    <property type="interactions" value="96"/>
</dbReference>
<dbReference type="MINT" id="Q99207"/>
<dbReference type="STRING" id="4932.YDL148C"/>
<dbReference type="iPTMnet" id="Q99207"/>
<dbReference type="PaxDb" id="4932-YDL148C"/>
<dbReference type="PeptideAtlas" id="Q99207"/>
<dbReference type="EnsemblFungi" id="YDL148C_mRNA">
    <property type="protein sequence ID" value="YDL148C"/>
    <property type="gene ID" value="YDL148C"/>
</dbReference>
<dbReference type="GeneID" id="851407"/>
<dbReference type="KEGG" id="sce:YDL148C"/>
<dbReference type="AGR" id="SGD:S000002307"/>
<dbReference type="SGD" id="S000002307">
    <property type="gene designation" value="NOP14"/>
</dbReference>
<dbReference type="VEuPathDB" id="FungiDB:YDL148C"/>
<dbReference type="eggNOG" id="KOG2147">
    <property type="taxonomic scope" value="Eukaryota"/>
</dbReference>
<dbReference type="GeneTree" id="ENSGT00390000017459"/>
<dbReference type="HOGENOM" id="CLU_008874_0_0_1"/>
<dbReference type="InParanoid" id="Q99207"/>
<dbReference type="OMA" id="KSCWPSL"/>
<dbReference type="OrthoDB" id="441771at2759"/>
<dbReference type="BioCyc" id="YEAST:G3O-29545-MONOMER"/>
<dbReference type="Reactome" id="R-SCE-6791226">
    <property type="pathway name" value="Major pathway of rRNA processing in the nucleolus and cytosol"/>
</dbReference>
<dbReference type="BioGRID-ORCS" id="851407">
    <property type="hits" value="2 hits in 10 CRISPR screens"/>
</dbReference>
<dbReference type="CD-CODE" id="BDAE0F88">
    <property type="entry name" value="Nucleolus"/>
</dbReference>
<dbReference type="CD-CODE" id="E03F929F">
    <property type="entry name" value="Stress granule"/>
</dbReference>
<dbReference type="PRO" id="PR:Q99207"/>
<dbReference type="Proteomes" id="UP000002311">
    <property type="component" value="Chromosome IV"/>
</dbReference>
<dbReference type="RNAct" id="Q99207">
    <property type="molecule type" value="protein"/>
</dbReference>
<dbReference type="GO" id="GO:0030686">
    <property type="term" value="C:90S preribosome"/>
    <property type="evidence" value="ECO:0007005"/>
    <property type="project" value="SGD"/>
</dbReference>
<dbReference type="GO" id="GO:0005739">
    <property type="term" value="C:mitochondrion"/>
    <property type="evidence" value="ECO:0007005"/>
    <property type="project" value="SGD"/>
</dbReference>
<dbReference type="GO" id="GO:0030692">
    <property type="term" value="C:Noc4p-Nop14p complex"/>
    <property type="evidence" value="ECO:0000353"/>
    <property type="project" value="SGD"/>
</dbReference>
<dbReference type="GO" id="GO:0005730">
    <property type="term" value="C:nucleolus"/>
    <property type="evidence" value="ECO:0000314"/>
    <property type="project" value="SGD"/>
</dbReference>
<dbReference type="GO" id="GO:0005654">
    <property type="term" value="C:nucleoplasm"/>
    <property type="evidence" value="ECO:0000304"/>
    <property type="project" value="Reactome"/>
</dbReference>
<dbReference type="GO" id="GO:0005634">
    <property type="term" value="C:nucleus"/>
    <property type="evidence" value="ECO:0000303"/>
    <property type="project" value="ComplexPortal"/>
</dbReference>
<dbReference type="GO" id="GO:0030688">
    <property type="term" value="C:preribosome, small subunit precursor"/>
    <property type="evidence" value="ECO:0000314"/>
    <property type="project" value="GO_Central"/>
</dbReference>
<dbReference type="GO" id="GO:0032040">
    <property type="term" value="C:small-subunit processome"/>
    <property type="evidence" value="ECO:0000314"/>
    <property type="project" value="SGD"/>
</dbReference>
<dbReference type="GO" id="GO:0034511">
    <property type="term" value="F:U3 snoRNA binding"/>
    <property type="evidence" value="ECO:0000314"/>
    <property type="project" value="SGD"/>
</dbReference>
<dbReference type="GO" id="GO:0000480">
    <property type="term" value="P:endonucleolytic cleavage in 5'-ETS of tricistronic rRNA transcript (SSU-rRNA, 5.8S rRNA, LSU-rRNA)"/>
    <property type="evidence" value="ECO:0000315"/>
    <property type="project" value="SGD"/>
</dbReference>
<dbReference type="GO" id="GO:0000447">
    <property type="term" value="P:endonucleolytic cleavage in ITS1 to separate SSU-rRNA from 5.8S rRNA and LSU-rRNA from tricistronic rRNA transcript (SSU-rRNA, 5.8S rRNA, LSU-rRNA)"/>
    <property type="evidence" value="ECO:0000315"/>
    <property type="project" value="SGD"/>
</dbReference>
<dbReference type="GO" id="GO:0000472">
    <property type="term" value="P:endonucleolytic cleavage to generate mature 5'-end of SSU-rRNA from (SSU-rRNA, 5.8S rRNA, LSU-rRNA)"/>
    <property type="evidence" value="ECO:0000315"/>
    <property type="project" value="SGD"/>
</dbReference>
<dbReference type="GO" id="GO:0030490">
    <property type="term" value="P:maturation of SSU-rRNA"/>
    <property type="evidence" value="ECO:0000318"/>
    <property type="project" value="GO_Central"/>
</dbReference>
<dbReference type="GO" id="GO:0000462">
    <property type="term" value="P:maturation of SSU-rRNA from tricistronic rRNA transcript (SSU-rRNA, 5.8S rRNA, LSU-rRNA)"/>
    <property type="evidence" value="ECO:0000315"/>
    <property type="project" value="SGD"/>
</dbReference>
<dbReference type="GO" id="GO:0000028">
    <property type="term" value="P:ribosomal small subunit assembly"/>
    <property type="evidence" value="ECO:0000303"/>
    <property type="project" value="ComplexPortal"/>
</dbReference>
<dbReference type="GO" id="GO:0042274">
    <property type="term" value="P:ribosomal small subunit biogenesis"/>
    <property type="evidence" value="ECO:0000315"/>
    <property type="project" value="SGD"/>
</dbReference>
<dbReference type="GO" id="GO:0006364">
    <property type="term" value="P:rRNA processing"/>
    <property type="evidence" value="ECO:0000315"/>
    <property type="project" value="SGD"/>
</dbReference>
<dbReference type="InterPro" id="IPR007276">
    <property type="entry name" value="Nop14"/>
</dbReference>
<dbReference type="PANTHER" id="PTHR23183">
    <property type="entry name" value="NOP14"/>
    <property type="match status" value="1"/>
</dbReference>
<dbReference type="PANTHER" id="PTHR23183:SF0">
    <property type="entry name" value="NUCLEOLAR PROTEIN 14"/>
    <property type="match status" value="1"/>
</dbReference>
<dbReference type="Pfam" id="PF04147">
    <property type="entry name" value="Nop14"/>
    <property type="match status" value="2"/>
</dbReference>
<sequence>MAGSQLKNLKAALKARGLTGQTNVKSKNKKNSKRQAKEYDREEKKKAIAEIREEFNPFEIKAARNKRRDGLPSKTADRIAVGKPGISKQIGEEQRKRAFEARKMMKNKRGGVIDKRFGERDKLLTEEEKMLERFTRERQSQSKRNANLFNLEDDEDDGDMFGDGLTHLGQSLSLEDELANDEEDFLASKRFNEDDAELQQPQRKKTKAEVMKEVIAKSKFYKQERQKAQGIMEDQIDNLDDNFEDVMSELMMTQPKKNPMEPKTDLDKEYDIKVKELQLDKRAAPSDRTKTEEEKNAEAEEKKRELEQQRLDRMNGMIELEEGEERGVEDLDDGFWENEEDYEDDNDGIADSDDDIKFEDQGRDEGFSQILKKKNISISCPRTHDALLDQVKKLDLDDHPKIVKNIIKAYQPKLAEGNKEKLGKFTAVLLRHIIFLSNQNYLKNVQSFKRTQNALISILKSLSEKYNRELSEECRDYINEMQARYKKNHFDALSNGDLVFFSIIGILFSTSDQYHLVITPALILMSQFLEQIKFNSLKRIAFGAVLVRIVSQYQRISKRYIPEVVYFFQKILLTFIVEKENQEKPLDFENIRLDSYELGLPLDVDFTKKRSTIIPLHTLSTMDTEAHPVDQCVSVLLNVMESLDATISTVWKSLPAFNEIILPIQQLLSAYTSKYSDFEKPRNILNKVEKLTKFTEHIPLALQNHKPVSIPTHAPKYEENFNPDKKSYDPDRTRSEINKMKAQLKKERKFTMKEIRKDAKFEARQRIEEKNKESSDYHAKMAHIVNTINTEEGAEKNKYERERKLRGGKK</sequence>
<organism>
    <name type="scientific">Saccharomyces cerevisiae (strain ATCC 204508 / S288c)</name>
    <name type="common">Baker's yeast</name>
    <dbReference type="NCBI Taxonomy" id="559292"/>
    <lineage>
        <taxon>Eukaryota</taxon>
        <taxon>Fungi</taxon>
        <taxon>Dikarya</taxon>
        <taxon>Ascomycota</taxon>
        <taxon>Saccharomycotina</taxon>
        <taxon>Saccharomycetes</taxon>
        <taxon>Saccharomycetales</taxon>
        <taxon>Saccharomycetaceae</taxon>
        <taxon>Saccharomyces</taxon>
    </lineage>
</organism>
<protein>
    <recommendedName>
        <fullName>Nucleolar complex protein 14</fullName>
    </recommendedName>
    <alternativeName>
        <fullName>U three protein 2</fullName>
    </alternativeName>
    <alternativeName>
        <fullName>U3 small nucleolar RNA-associated protein 2</fullName>
        <shortName>U3 snoRNA-associated protein 2</shortName>
    </alternativeName>
</protein>
<reference key="1">
    <citation type="journal article" date="1996" name="Yeast">
        <title>Analysis of a 23 kb region on the left arm of yeast chromosome IV.</title>
        <authorList>
            <person name="Delaveau T.T.D."/>
            <person name="Blugeon C."/>
            <person name="Jacq C."/>
            <person name="Perea J."/>
        </authorList>
    </citation>
    <scope>NUCLEOTIDE SEQUENCE [GENOMIC DNA]</scope>
    <source>
        <strain>ATCC 96604 / S288c / FY1679</strain>
    </source>
</reference>
<reference key="2">
    <citation type="journal article" date="1997" name="Nature">
        <title>The nucleotide sequence of Saccharomyces cerevisiae chromosome IV.</title>
        <authorList>
            <person name="Jacq C."/>
            <person name="Alt-Moerbe J."/>
            <person name="Andre B."/>
            <person name="Arnold W."/>
            <person name="Bahr A."/>
            <person name="Ballesta J.P.G."/>
            <person name="Bargues M."/>
            <person name="Baron L."/>
            <person name="Becker A."/>
            <person name="Biteau N."/>
            <person name="Bloecker H."/>
            <person name="Blugeon C."/>
            <person name="Boskovic J."/>
            <person name="Brandt P."/>
            <person name="Brueckner M."/>
            <person name="Buitrago M.J."/>
            <person name="Coster F."/>
            <person name="Delaveau T."/>
            <person name="del Rey F."/>
            <person name="Dujon B."/>
            <person name="Eide L.G."/>
            <person name="Garcia-Cantalejo J.M."/>
            <person name="Goffeau A."/>
            <person name="Gomez-Peris A."/>
            <person name="Granotier C."/>
            <person name="Hanemann V."/>
            <person name="Hankeln T."/>
            <person name="Hoheisel J.D."/>
            <person name="Jaeger W."/>
            <person name="Jimenez A."/>
            <person name="Jonniaux J.-L."/>
            <person name="Kraemer C."/>
            <person name="Kuester H."/>
            <person name="Laamanen P."/>
            <person name="Legros Y."/>
            <person name="Louis E.J."/>
            <person name="Moeller-Rieker S."/>
            <person name="Monnet A."/>
            <person name="Moro M."/>
            <person name="Mueller-Auer S."/>
            <person name="Nussbaumer B."/>
            <person name="Paricio N."/>
            <person name="Paulin L."/>
            <person name="Perea J."/>
            <person name="Perez-Alonso M."/>
            <person name="Perez-Ortin J.E."/>
            <person name="Pohl T.M."/>
            <person name="Prydz H."/>
            <person name="Purnelle B."/>
            <person name="Rasmussen S.W."/>
            <person name="Remacha M.A."/>
            <person name="Revuelta J.L."/>
            <person name="Rieger M."/>
            <person name="Salom D."/>
            <person name="Saluz H.P."/>
            <person name="Saiz J.E."/>
            <person name="Saren A.-M."/>
            <person name="Schaefer M."/>
            <person name="Scharfe M."/>
            <person name="Schmidt E.R."/>
            <person name="Schneider C."/>
            <person name="Scholler P."/>
            <person name="Schwarz S."/>
            <person name="Soler-Mira A."/>
            <person name="Urrestarazu L.A."/>
            <person name="Verhasselt P."/>
            <person name="Vissers S."/>
            <person name="Voet M."/>
            <person name="Volckaert G."/>
            <person name="Wagner G."/>
            <person name="Wambutt R."/>
            <person name="Wedler E."/>
            <person name="Wedler H."/>
            <person name="Woelfl S."/>
            <person name="Harris D.E."/>
            <person name="Bowman S."/>
            <person name="Brown D."/>
            <person name="Churcher C.M."/>
            <person name="Connor R."/>
            <person name="Dedman K."/>
            <person name="Gentles S."/>
            <person name="Hamlin N."/>
            <person name="Hunt S."/>
            <person name="Jones L."/>
            <person name="McDonald S."/>
            <person name="Murphy L.D."/>
            <person name="Niblett D."/>
            <person name="Odell C."/>
            <person name="Oliver K."/>
            <person name="Rajandream M.A."/>
            <person name="Richards C."/>
            <person name="Shore L."/>
            <person name="Walsh S.V."/>
            <person name="Barrell B.G."/>
            <person name="Dietrich F.S."/>
            <person name="Mulligan J.T."/>
            <person name="Allen E."/>
            <person name="Araujo R."/>
            <person name="Aviles E."/>
            <person name="Berno A."/>
            <person name="Carpenter J."/>
            <person name="Chen E."/>
            <person name="Cherry J.M."/>
            <person name="Chung E."/>
            <person name="Duncan M."/>
            <person name="Hunicke-Smith S."/>
            <person name="Hyman R.W."/>
            <person name="Komp C."/>
            <person name="Lashkari D."/>
            <person name="Lew H."/>
            <person name="Lin D."/>
            <person name="Mosedale D."/>
            <person name="Nakahara K."/>
            <person name="Namath A."/>
            <person name="Oefner P."/>
            <person name="Oh C."/>
            <person name="Petel F.X."/>
            <person name="Roberts D."/>
            <person name="Schramm S."/>
            <person name="Schroeder M."/>
            <person name="Shogren T."/>
            <person name="Shroff N."/>
            <person name="Winant A."/>
            <person name="Yelton M.A."/>
            <person name="Botstein D."/>
            <person name="Davis R.W."/>
            <person name="Johnston M."/>
            <person name="Andrews S."/>
            <person name="Brinkman R."/>
            <person name="Cooper J."/>
            <person name="Ding H."/>
            <person name="Du Z."/>
            <person name="Favello A."/>
            <person name="Fulton L."/>
            <person name="Gattung S."/>
            <person name="Greco T."/>
            <person name="Hallsworth K."/>
            <person name="Hawkins J."/>
            <person name="Hillier L.W."/>
            <person name="Jier M."/>
            <person name="Johnson D."/>
            <person name="Johnston L."/>
            <person name="Kirsten J."/>
            <person name="Kucaba T."/>
            <person name="Langston Y."/>
            <person name="Latreille P."/>
            <person name="Le T."/>
            <person name="Mardis E."/>
            <person name="Menezes S."/>
            <person name="Miller N."/>
            <person name="Nhan M."/>
            <person name="Pauley A."/>
            <person name="Peluso D."/>
            <person name="Rifkin L."/>
            <person name="Riles L."/>
            <person name="Taich A."/>
            <person name="Trevaskis E."/>
            <person name="Vignati D."/>
            <person name="Wilcox L."/>
            <person name="Wohldman P."/>
            <person name="Vaudin M."/>
            <person name="Wilson R."/>
            <person name="Waterston R."/>
            <person name="Albermann K."/>
            <person name="Hani J."/>
            <person name="Heumann K."/>
            <person name="Kleine K."/>
            <person name="Mewes H.-W."/>
            <person name="Zollner A."/>
            <person name="Zaccaria P."/>
        </authorList>
    </citation>
    <scope>NUCLEOTIDE SEQUENCE [LARGE SCALE GENOMIC DNA]</scope>
    <source>
        <strain>ATCC 204508 / S288c</strain>
    </source>
</reference>
<reference key="3">
    <citation type="journal article" date="2014" name="G3 (Bethesda)">
        <title>The reference genome sequence of Saccharomyces cerevisiae: Then and now.</title>
        <authorList>
            <person name="Engel S.R."/>
            <person name="Dietrich F.S."/>
            <person name="Fisk D.G."/>
            <person name="Binkley G."/>
            <person name="Balakrishnan R."/>
            <person name="Costanzo M.C."/>
            <person name="Dwight S.S."/>
            <person name="Hitz B.C."/>
            <person name="Karra K."/>
            <person name="Nash R.S."/>
            <person name="Weng S."/>
            <person name="Wong E.D."/>
            <person name="Lloyd P."/>
            <person name="Skrzypek M.S."/>
            <person name="Miyasato S.R."/>
            <person name="Simison M."/>
            <person name="Cherry J.M."/>
        </authorList>
    </citation>
    <scope>GENOME REANNOTATION</scope>
    <source>
        <strain>ATCC 204508 / S288c</strain>
    </source>
</reference>
<reference key="4">
    <citation type="journal article" date="2001" name="Mol. Biol. Cell">
        <title>Novel stress-responsive genes EMG1 and NOP14 encode conserved, interacting proteins required for 40S ribosome biogenesis.</title>
        <authorList>
            <person name="Liu P.C."/>
            <person name="Thiele D.J."/>
        </authorList>
    </citation>
    <scope>INTERACTION WITH EMG1</scope>
</reference>
<reference key="5">
    <citation type="journal article" date="2002" name="Nature">
        <title>A large nucleolar U3 ribonucleoprotein required for 18S ribosomal RNA biogenesis.</title>
        <authorList>
            <person name="Dragon F."/>
            <person name="Gallagher J.E.G."/>
            <person name="Compagnone-Post P.A."/>
            <person name="Mitchell B.M."/>
            <person name="Porwancher K.A."/>
            <person name="Wehner K.A."/>
            <person name="Wormsley S."/>
            <person name="Settlage R.E."/>
            <person name="Shabanowitz J."/>
            <person name="Osheim Y."/>
            <person name="Beyer A.L."/>
            <person name="Hunt D.F."/>
            <person name="Baserga S.J."/>
        </authorList>
    </citation>
    <scope>FUNCTION</scope>
    <scope>INTERACTION WITH MPP10 AND SNORNA U3</scope>
    <scope>IDENTIFICATION IN SSU PROCESSOME BY MASS SPECTROMETRY</scope>
    <scope>SUBCELLULAR LOCATION</scope>
</reference>
<reference key="6">
    <citation type="journal article" date="2003" name="J. Biol. Chem.">
        <title>A Noc complex specifically involved in the formation and nuclear export of ribosomal 40 S subunits.</title>
        <authorList>
            <person name="Milkereit P."/>
            <person name="Strauss D."/>
            <person name="Bassler J."/>
            <person name="Gadal O."/>
            <person name="Kuhn H."/>
            <person name="Schutz S."/>
            <person name="Gas N."/>
            <person name="Lechner J."/>
            <person name="Hurt E."/>
            <person name="Tschochner H."/>
        </authorList>
    </citation>
    <scope>FUNCTION</scope>
    <scope>INTERACTION WITH NOC4</scope>
    <scope>SUBCELLULAR LOCATION</scope>
</reference>
<reference key="7">
    <citation type="journal article" date="2012" name="Proc. Natl. Acad. Sci. U.S.A.">
        <title>N-terminal acetylome analyses and functional insights of the N-terminal acetyltransferase NatB.</title>
        <authorList>
            <person name="Van Damme P."/>
            <person name="Lasa M."/>
            <person name="Polevoda B."/>
            <person name="Gazquez C."/>
            <person name="Elosegui-Artola A."/>
            <person name="Kim D.S."/>
            <person name="De Juan-Pardo E."/>
            <person name="Demeyer K."/>
            <person name="Hole K."/>
            <person name="Larrea E."/>
            <person name="Timmerman E."/>
            <person name="Prieto J."/>
            <person name="Arnesen T."/>
            <person name="Sherman F."/>
            <person name="Gevaert K."/>
            <person name="Aldabe R."/>
        </authorList>
    </citation>
    <scope>IDENTIFICATION BY MASS SPECTROMETRY [LARGE SCALE ANALYSIS]</scope>
</reference>
<name>NOP14_YEAST</name>
<accession>Q99207</accession>
<accession>D6VRK0</accession>
<gene>
    <name type="primary">NOP14</name>
    <name type="synonym">UTP2</name>
    <name type="ordered locus">YDL148C</name>
    <name type="ORF">D1566</name>
</gene>
<proteinExistence type="evidence at protein level"/>
<evidence type="ECO:0000256" key="1">
    <source>
        <dbReference type="SAM" id="MobiDB-lite"/>
    </source>
</evidence>
<evidence type="ECO:0000269" key="2">
    <source>
    </source>
</evidence>
<evidence type="ECO:0000269" key="3">
    <source>
    </source>
</evidence>
<evidence type="ECO:0000269" key="4">
    <source>
    </source>
</evidence>
<evidence type="ECO:0000305" key="5"/>